<proteinExistence type="inferred from homology"/>
<name>YSC6_STRGC</name>
<feature type="chain" id="PRO_0000078233" description="Putative zinc metalloproteinase in scaA 5'region">
    <location>
        <begin position="1"/>
        <end position="564" status="greater than"/>
    </location>
</feature>
<feature type="domain" description="Peptidase M13" evidence="2">
    <location>
        <begin position="1"/>
        <end position="564" status="greater than"/>
    </location>
</feature>
<feature type="active site" evidence="2 3">
    <location>
        <position position="479"/>
    </location>
</feature>
<feature type="active site" description="Proton donor" evidence="2">
    <location>
        <position position="542"/>
    </location>
</feature>
<feature type="binding site" evidence="2 3">
    <location>
        <position position="478"/>
    </location>
    <ligand>
        <name>Zn(2+)</name>
        <dbReference type="ChEBI" id="CHEBI:29105"/>
        <note>catalytic</note>
    </ligand>
</feature>
<feature type="binding site" evidence="2 3">
    <location>
        <position position="482"/>
    </location>
    <ligand>
        <name>Zn(2+)</name>
        <dbReference type="ChEBI" id="CHEBI:29105"/>
        <note>catalytic</note>
    </ligand>
</feature>
<feature type="binding site" evidence="2">
    <location>
        <position position="538"/>
    </location>
    <ligand>
        <name>Zn(2+)</name>
        <dbReference type="ChEBI" id="CHEBI:29105"/>
        <note>catalytic</note>
    </ligand>
</feature>
<feature type="non-terminal residue">
    <location>
        <position position="564"/>
    </location>
</feature>
<reference key="1">
    <citation type="journal article" date="1994" name="Infect. Immun.">
        <title>Nucleotide sequence of the Streptococcus gordonii PK488 coaggregation adhesin gene, scaA, and ATP-binding cassette.</title>
        <authorList>
            <person name="Kolenbrander P.E."/>
            <person name="Andersen R.N."/>
            <person name="Ganeshkumar N."/>
        </authorList>
    </citation>
    <scope>NUCLEOTIDE SEQUENCE [GENOMIC DNA]</scope>
    <source>
        <strain>ATCC 51656 / PK488</strain>
    </source>
</reference>
<accession>P42359</accession>
<dbReference type="EC" id="3.4.24.-"/>
<dbReference type="EMBL" id="L11577">
    <property type="protein sequence ID" value="AAA71944.1"/>
    <property type="molecule type" value="Genomic_DNA"/>
</dbReference>
<dbReference type="PIR" id="T11548">
    <property type="entry name" value="T11548"/>
</dbReference>
<dbReference type="SMR" id="P42359"/>
<dbReference type="STRING" id="467705.SGO_1799"/>
<dbReference type="MEROPS" id="M13.005"/>
<dbReference type="eggNOG" id="COG3590">
    <property type="taxonomic scope" value="Bacteria"/>
</dbReference>
<dbReference type="GO" id="GO:0005886">
    <property type="term" value="C:plasma membrane"/>
    <property type="evidence" value="ECO:0007669"/>
    <property type="project" value="TreeGrafter"/>
</dbReference>
<dbReference type="GO" id="GO:0046872">
    <property type="term" value="F:metal ion binding"/>
    <property type="evidence" value="ECO:0007669"/>
    <property type="project" value="UniProtKB-KW"/>
</dbReference>
<dbReference type="GO" id="GO:0004222">
    <property type="term" value="F:metalloendopeptidase activity"/>
    <property type="evidence" value="ECO:0007669"/>
    <property type="project" value="InterPro"/>
</dbReference>
<dbReference type="GO" id="GO:0016485">
    <property type="term" value="P:protein processing"/>
    <property type="evidence" value="ECO:0007669"/>
    <property type="project" value="TreeGrafter"/>
</dbReference>
<dbReference type="CDD" id="cd08662">
    <property type="entry name" value="M13"/>
    <property type="match status" value="1"/>
</dbReference>
<dbReference type="Gene3D" id="3.40.390.10">
    <property type="entry name" value="Collagenase (Catalytic Domain)"/>
    <property type="match status" value="1"/>
</dbReference>
<dbReference type="Gene3D" id="1.10.1380.10">
    <property type="entry name" value="Neutral endopeptidase , domain2"/>
    <property type="match status" value="1"/>
</dbReference>
<dbReference type="InterPro" id="IPR024079">
    <property type="entry name" value="MetalloPept_cat_dom_sf"/>
</dbReference>
<dbReference type="InterPro" id="IPR000718">
    <property type="entry name" value="Peptidase_M13"/>
</dbReference>
<dbReference type="InterPro" id="IPR018497">
    <property type="entry name" value="Peptidase_M13_C"/>
</dbReference>
<dbReference type="InterPro" id="IPR042089">
    <property type="entry name" value="Peptidase_M13_dom_2"/>
</dbReference>
<dbReference type="InterPro" id="IPR008753">
    <property type="entry name" value="Peptidase_M13_N"/>
</dbReference>
<dbReference type="PANTHER" id="PTHR11733:SF167">
    <property type="entry name" value="FI17812P1-RELATED"/>
    <property type="match status" value="1"/>
</dbReference>
<dbReference type="PANTHER" id="PTHR11733">
    <property type="entry name" value="ZINC METALLOPROTEASE FAMILY M13 NEPRILYSIN-RELATED"/>
    <property type="match status" value="1"/>
</dbReference>
<dbReference type="Pfam" id="PF01431">
    <property type="entry name" value="Peptidase_M13"/>
    <property type="match status" value="1"/>
</dbReference>
<dbReference type="Pfam" id="PF05649">
    <property type="entry name" value="Peptidase_M13_N"/>
    <property type="match status" value="1"/>
</dbReference>
<dbReference type="PRINTS" id="PR00786">
    <property type="entry name" value="NEPRILYSIN"/>
</dbReference>
<dbReference type="SUPFAM" id="SSF55486">
    <property type="entry name" value="Metalloproteases ('zincins'), catalytic domain"/>
    <property type="match status" value="1"/>
</dbReference>
<dbReference type="PROSITE" id="PS51885">
    <property type="entry name" value="NEPRILYSIN"/>
    <property type="match status" value="1"/>
</dbReference>
<dbReference type="PROSITE" id="PS00142">
    <property type="entry name" value="ZINC_PROTEASE"/>
    <property type="match status" value="1"/>
</dbReference>
<organism>
    <name type="scientific">Streptococcus gordonii (strain Challis / ATCC 35105 / BCRC 15272 / CH1 / DL1 / V288)</name>
    <dbReference type="NCBI Taxonomy" id="467705"/>
    <lineage>
        <taxon>Bacteria</taxon>
        <taxon>Bacillati</taxon>
        <taxon>Bacillota</taxon>
        <taxon>Bacilli</taxon>
        <taxon>Lactobacillales</taxon>
        <taxon>Streptococcaceae</taxon>
        <taxon>Streptococcus</taxon>
    </lineage>
</organism>
<comment type="cofactor">
    <cofactor evidence="1">
        <name>Zn(2+)</name>
        <dbReference type="ChEBI" id="CHEBI:29105"/>
    </cofactor>
    <text evidence="1">Binds 1 zinc ion per subunit.</text>
</comment>
<comment type="similarity">
    <text evidence="2 4">Belongs to the peptidase M13 family.</text>
</comment>
<protein>
    <recommendedName>
        <fullName>Putative zinc metalloproteinase in scaA 5'region</fullName>
        <ecNumber>3.4.24.-</ecNumber>
    </recommendedName>
    <alternativeName>
        <fullName>ORF6</fullName>
    </alternativeName>
</protein>
<evidence type="ECO:0000250" key="1"/>
<evidence type="ECO:0000255" key="2">
    <source>
        <dbReference type="PROSITE-ProRule" id="PRU01233"/>
    </source>
</evidence>
<evidence type="ECO:0000255" key="3">
    <source>
        <dbReference type="PROSITE-ProRule" id="PRU10095"/>
    </source>
</evidence>
<evidence type="ECO:0000305" key="4"/>
<sequence>MTRLQDDFYDAINGEWAKTAVIPDDKPVTGGFMDLAEEIEDLMLSTTDKWLAGDGVPEDAILQNFVAYHRLAADYDKREAAGTEPARAYIDEIRNLASFEEYASKIADFELAGKPTYFPFGVAPDFMDARINVLWADGPGTILPDTTYYAEDHPQKADLLAKWRKAQEDLLAKFDFTEEEIKDLLDKVLDLDAVFAQYVLSNEESSEYAKLYHPYKWDDFKALVPELPLTDIFTKLIGQEPDQVIVPEERFWKAAKDIYTAANWDKLHALLILSAVRNTTPYLTDDIRVLAGAYQRALSGTPQAQDKKKAAYYLAQGPFNQAIGLWYAGQKFSPEAKADVEQKVVTMIEVYKNRLAQNDWLTPETRDKAIVKLNVIKPYIGYPDELPERYSRKIVDENLTLFENAQKLSLIDIAYSWSKWNQPVDYKEWGMPAHMVNAYYNPQKNLIVFPAAILQAPFYDLHQSSSANYGGIGAVIAHEISHAFDTNGASFDENGSLNNWWTEHDYQAFTERTQKVIDQFEGQDSYGAKVNGKLTVSENVADLGGIAAALEAAKKEADFSAEEF</sequence>
<keyword id="KW-0378">Hydrolase</keyword>
<keyword id="KW-0479">Metal-binding</keyword>
<keyword id="KW-0482">Metalloprotease</keyword>
<keyword id="KW-0645">Protease</keyword>
<keyword id="KW-0862">Zinc</keyword>